<accession>Q87DG6</accession>
<gene>
    <name evidence="1" type="primary">rpoZ</name>
    <name type="ordered locus">PD_0719</name>
</gene>
<feature type="chain" id="PRO_0000129018" description="DNA-directed RNA polymerase subunit omega">
    <location>
        <begin position="1"/>
        <end position="99"/>
    </location>
</feature>
<proteinExistence type="inferred from homology"/>
<name>RPOZ_XYLFT</name>
<comment type="function">
    <text evidence="1">Promotes RNA polymerase assembly. Latches the N- and C-terminal regions of the beta' subunit thereby facilitating its interaction with the beta and alpha subunits.</text>
</comment>
<comment type="catalytic activity">
    <reaction evidence="1">
        <text>RNA(n) + a ribonucleoside 5'-triphosphate = RNA(n+1) + diphosphate</text>
        <dbReference type="Rhea" id="RHEA:21248"/>
        <dbReference type="Rhea" id="RHEA-COMP:14527"/>
        <dbReference type="Rhea" id="RHEA-COMP:17342"/>
        <dbReference type="ChEBI" id="CHEBI:33019"/>
        <dbReference type="ChEBI" id="CHEBI:61557"/>
        <dbReference type="ChEBI" id="CHEBI:140395"/>
        <dbReference type="EC" id="2.7.7.6"/>
    </reaction>
</comment>
<comment type="subunit">
    <text evidence="1">The RNAP catalytic core consists of 2 alpha, 1 beta, 1 beta' and 1 omega subunit. When a sigma factor is associated with the core the holoenzyme is formed, which can initiate transcription.</text>
</comment>
<comment type="similarity">
    <text evidence="1">Belongs to the RNA polymerase subunit omega family.</text>
</comment>
<sequence>MARITVEDCLEVVNNRFELVMMASKRARQLANGVPPLIENTNSEDKPTVMALREIAARKINSKMIDEIEKAERERAEREAMEWAAAEVVADEDMSKSDD</sequence>
<protein>
    <recommendedName>
        <fullName evidence="1">DNA-directed RNA polymerase subunit omega</fullName>
        <shortName evidence="1">RNAP omega subunit</shortName>
        <ecNumber evidence="1">2.7.7.6</ecNumber>
    </recommendedName>
    <alternativeName>
        <fullName evidence="1">RNA polymerase omega subunit</fullName>
    </alternativeName>
    <alternativeName>
        <fullName evidence="1">Transcriptase subunit omega</fullName>
    </alternativeName>
</protein>
<evidence type="ECO:0000255" key="1">
    <source>
        <dbReference type="HAMAP-Rule" id="MF_00366"/>
    </source>
</evidence>
<reference key="1">
    <citation type="journal article" date="2003" name="J. Bacteriol.">
        <title>Comparative analyses of the complete genome sequences of Pierce's disease and citrus variegated chlorosis strains of Xylella fastidiosa.</title>
        <authorList>
            <person name="Van Sluys M.A."/>
            <person name="de Oliveira M.C."/>
            <person name="Monteiro-Vitorello C.B."/>
            <person name="Miyaki C.Y."/>
            <person name="Furlan L.R."/>
            <person name="Camargo L.E.A."/>
            <person name="da Silva A.C.R."/>
            <person name="Moon D.H."/>
            <person name="Takita M.A."/>
            <person name="Lemos E.G.M."/>
            <person name="Machado M.A."/>
            <person name="Ferro M.I.T."/>
            <person name="da Silva F.R."/>
            <person name="Goldman M.H.S."/>
            <person name="Goldman G.H."/>
            <person name="Lemos M.V.F."/>
            <person name="El-Dorry H."/>
            <person name="Tsai S.M."/>
            <person name="Carrer H."/>
            <person name="Carraro D.M."/>
            <person name="de Oliveira R.C."/>
            <person name="Nunes L.R."/>
            <person name="Siqueira W.J."/>
            <person name="Coutinho L.L."/>
            <person name="Kimura E.T."/>
            <person name="Ferro E.S."/>
            <person name="Harakava R."/>
            <person name="Kuramae E.E."/>
            <person name="Marino C.L."/>
            <person name="Giglioti E."/>
            <person name="Abreu I.L."/>
            <person name="Alves L.M.C."/>
            <person name="do Amaral A.M."/>
            <person name="Baia G.S."/>
            <person name="Blanco S.R."/>
            <person name="Brito M.S."/>
            <person name="Cannavan F.S."/>
            <person name="Celestino A.V."/>
            <person name="da Cunha A.F."/>
            <person name="Fenille R.C."/>
            <person name="Ferro J.A."/>
            <person name="Formighieri E.F."/>
            <person name="Kishi L.T."/>
            <person name="Leoni S.G."/>
            <person name="Oliveira A.R."/>
            <person name="Rosa V.E. Jr."/>
            <person name="Sassaki F.T."/>
            <person name="Sena J.A.D."/>
            <person name="de Souza A.A."/>
            <person name="Truffi D."/>
            <person name="Tsukumo F."/>
            <person name="Yanai G.M."/>
            <person name="Zaros L.G."/>
            <person name="Civerolo E.L."/>
            <person name="Simpson A.J.G."/>
            <person name="Almeida N.F. Jr."/>
            <person name="Setubal J.C."/>
            <person name="Kitajima J.P."/>
        </authorList>
    </citation>
    <scope>NUCLEOTIDE SEQUENCE [LARGE SCALE GENOMIC DNA]</scope>
    <source>
        <strain>Temecula1 / ATCC 700964</strain>
    </source>
</reference>
<organism>
    <name type="scientific">Xylella fastidiosa (strain Temecula1 / ATCC 700964)</name>
    <dbReference type="NCBI Taxonomy" id="183190"/>
    <lineage>
        <taxon>Bacteria</taxon>
        <taxon>Pseudomonadati</taxon>
        <taxon>Pseudomonadota</taxon>
        <taxon>Gammaproteobacteria</taxon>
        <taxon>Lysobacterales</taxon>
        <taxon>Lysobacteraceae</taxon>
        <taxon>Xylella</taxon>
    </lineage>
</organism>
<dbReference type="EC" id="2.7.7.6" evidence="1"/>
<dbReference type="EMBL" id="AE009442">
    <property type="protein sequence ID" value="AAO28588.1"/>
    <property type="molecule type" value="Genomic_DNA"/>
</dbReference>
<dbReference type="RefSeq" id="WP_004089002.1">
    <property type="nucleotide sequence ID" value="NC_004556.1"/>
</dbReference>
<dbReference type="SMR" id="Q87DG6"/>
<dbReference type="GeneID" id="93904499"/>
<dbReference type="KEGG" id="xft:PD_0719"/>
<dbReference type="HOGENOM" id="CLU_125406_5_3_6"/>
<dbReference type="Proteomes" id="UP000002516">
    <property type="component" value="Chromosome"/>
</dbReference>
<dbReference type="GO" id="GO:0000428">
    <property type="term" value="C:DNA-directed RNA polymerase complex"/>
    <property type="evidence" value="ECO:0007669"/>
    <property type="project" value="UniProtKB-KW"/>
</dbReference>
<dbReference type="GO" id="GO:0003677">
    <property type="term" value="F:DNA binding"/>
    <property type="evidence" value="ECO:0007669"/>
    <property type="project" value="UniProtKB-UniRule"/>
</dbReference>
<dbReference type="GO" id="GO:0003899">
    <property type="term" value="F:DNA-directed RNA polymerase activity"/>
    <property type="evidence" value="ECO:0007669"/>
    <property type="project" value="UniProtKB-UniRule"/>
</dbReference>
<dbReference type="GO" id="GO:0006351">
    <property type="term" value="P:DNA-templated transcription"/>
    <property type="evidence" value="ECO:0007669"/>
    <property type="project" value="UniProtKB-UniRule"/>
</dbReference>
<dbReference type="Gene3D" id="3.90.940.10">
    <property type="match status" value="1"/>
</dbReference>
<dbReference type="HAMAP" id="MF_00366">
    <property type="entry name" value="RNApol_bact_RpoZ"/>
    <property type="match status" value="1"/>
</dbReference>
<dbReference type="InterPro" id="IPR003716">
    <property type="entry name" value="DNA-dir_RNA_pol_omega"/>
</dbReference>
<dbReference type="InterPro" id="IPR006110">
    <property type="entry name" value="Pol_omega/Rpo6/RPB6"/>
</dbReference>
<dbReference type="InterPro" id="IPR036161">
    <property type="entry name" value="RPB6/omega-like_sf"/>
</dbReference>
<dbReference type="NCBIfam" id="TIGR00690">
    <property type="entry name" value="rpoZ"/>
    <property type="match status" value="1"/>
</dbReference>
<dbReference type="PANTHER" id="PTHR34476">
    <property type="entry name" value="DNA-DIRECTED RNA POLYMERASE SUBUNIT OMEGA"/>
    <property type="match status" value="1"/>
</dbReference>
<dbReference type="PANTHER" id="PTHR34476:SF1">
    <property type="entry name" value="DNA-DIRECTED RNA POLYMERASE SUBUNIT OMEGA"/>
    <property type="match status" value="1"/>
</dbReference>
<dbReference type="Pfam" id="PF01192">
    <property type="entry name" value="RNA_pol_Rpb6"/>
    <property type="match status" value="1"/>
</dbReference>
<dbReference type="SMART" id="SM01409">
    <property type="entry name" value="RNA_pol_Rpb6"/>
    <property type="match status" value="1"/>
</dbReference>
<dbReference type="SUPFAM" id="SSF63562">
    <property type="entry name" value="RPB6/omega subunit-like"/>
    <property type="match status" value="1"/>
</dbReference>
<keyword id="KW-0240">DNA-directed RNA polymerase</keyword>
<keyword id="KW-0548">Nucleotidyltransferase</keyword>
<keyword id="KW-1185">Reference proteome</keyword>
<keyword id="KW-0804">Transcription</keyword>
<keyword id="KW-0808">Transferase</keyword>